<dbReference type="EC" id="3.1.21.10" evidence="1"/>
<dbReference type="EMBL" id="CR626927">
    <property type="protein sequence ID" value="CAH08796.1"/>
    <property type="molecule type" value="Genomic_DNA"/>
</dbReference>
<dbReference type="RefSeq" id="WP_005789290.1">
    <property type="nucleotide sequence ID" value="NZ_UFTH01000001.1"/>
</dbReference>
<dbReference type="SMR" id="Q5LAS7"/>
<dbReference type="PaxDb" id="272559-BF9343_3015"/>
<dbReference type="GeneID" id="60370116"/>
<dbReference type="KEGG" id="bfs:BF9343_3015"/>
<dbReference type="eggNOG" id="COG0817">
    <property type="taxonomic scope" value="Bacteria"/>
</dbReference>
<dbReference type="HOGENOM" id="CLU_091257_3_0_10"/>
<dbReference type="Proteomes" id="UP000006731">
    <property type="component" value="Chromosome"/>
</dbReference>
<dbReference type="GO" id="GO:0005737">
    <property type="term" value="C:cytoplasm"/>
    <property type="evidence" value="ECO:0007669"/>
    <property type="project" value="UniProtKB-SubCell"/>
</dbReference>
<dbReference type="GO" id="GO:0048476">
    <property type="term" value="C:Holliday junction resolvase complex"/>
    <property type="evidence" value="ECO:0007669"/>
    <property type="project" value="UniProtKB-UniRule"/>
</dbReference>
<dbReference type="GO" id="GO:0008821">
    <property type="term" value="F:crossover junction DNA endonuclease activity"/>
    <property type="evidence" value="ECO:0007669"/>
    <property type="project" value="UniProtKB-UniRule"/>
</dbReference>
<dbReference type="GO" id="GO:0003677">
    <property type="term" value="F:DNA binding"/>
    <property type="evidence" value="ECO:0007669"/>
    <property type="project" value="UniProtKB-KW"/>
</dbReference>
<dbReference type="GO" id="GO:0000287">
    <property type="term" value="F:magnesium ion binding"/>
    <property type="evidence" value="ECO:0007669"/>
    <property type="project" value="UniProtKB-UniRule"/>
</dbReference>
<dbReference type="GO" id="GO:0006310">
    <property type="term" value="P:DNA recombination"/>
    <property type="evidence" value="ECO:0007669"/>
    <property type="project" value="UniProtKB-UniRule"/>
</dbReference>
<dbReference type="GO" id="GO:0006281">
    <property type="term" value="P:DNA repair"/>
    <property type="evidence" value="ECO:0007669"/>
    <property type="project" value="UniProtKB-UniRule"/>
</dbReference>
<dbReference type="CDD" id="cd16962">
    <property type="entry name" value="RuvC"/>
    <property type="match status" value="1"/>
</dbReference>
<dbReference type="FunFam" id="3.30.420.10:FF:000002">
    <property type="entry name" value="Crossover junction endodeoxyribonuclease RuvC"/>
    <property type="match status" value="1"/>
</dbReference>
<dbReference type="Gene3D" id="3.30.420.10">
    <property type="entry name" value="Ribonuclease H-like superfamily/Ribonuclease H"/>
    <property type="match status" value="1"/>
</dbReference>
<dbReference type="HAMAP" id="MF_00034">
    <property type="entry name" value="RuvC"/>
    <property type="match status" value="1"/>
</dbReference>
<dbReference type="InterPro" id="IPR012337">
    <property type="entry name" value="RNaseH-like_sf"/>
</dbReference>
<dbReference type="InterPro" id="IPR036397">
    <property type="entry name" value="RNaseH_sf"/>
</dbReference>
<dbReference type="InterPro" id="IPR020563">
    <property type="entry name" value="X-over_junc_endoDNase_Mg_BS"/>
</dbReference>
<dbReference type="InterPro" id="IPR002176">
    <property type="entry name" value="X-over_junc_endoDNase_RuvC"/>
</dbReference>
<dbReference type="NCBIfam" id="TIGR00228">
    <property type="entry name" value="ruvC"/>
    <property type="match status" value="1"/>
</dbReference>
<dbReference type="PANTHER" id="PTHR30194">
    <property type="entry name" value="CROSSOVER JUNCTION ENDODEOXYRIBONUCLEASE RUVC"/>
    <property type="match status" value="1"/>
</dbReference>
<dbReference type="PANTHER" id="PTHR30194:SF3">
    <property type="entry name" value="CROSSOVER JUNCTION ENDODEOXYRIBONUCLEASE RUVC"/>
    <property type="match status" value="1"/>
</dbReference>
<dbReference type="Pfam" id="PF02075">
    <property type="entry name" value="RuvC"/>
    <property type="match status" value="1"/>
</dbReference>
<dbReference type="PRINTS" id="PR00696">
    <property type="entry name" value="RSOLVASERUVC"/>
</dbReference>
<dbReference type="SUPFAM" id="SSF53098">
    <property type="entry name" value="Ribonuclease H-like"/>
    <property type="match status" value="1"/>
</dbReference>
<dbReference type="PROSITE" id="PS01321">
    <property type="entry name" value="RUVC"/>
    <property type="match status" value="1"/>
</dbReference>
<feature type="chain" id="PRO_0000225120" description="Crossover junction endodeoxyribonuclease RuvC">
    <location>
        <begin position="1"/>
        <end position="188"/>
    </location>
</feature>
<feature type="active site" evidence="1">
    <location>
        <position position="14"/>
    </location>
</feature>
<feature type="active site" evidence="1">
    <location>
        <position position="74"/>
    </location>
</feature>
<feature type="active site" evidence="1">
    <location>
        <position position="149"/>
    </location>
</feature>
<feature type="binding site" evidence="1">
    <location>
        <position position="14"/>
    </location>
    <ligand>
        <name>Mg(2+)</name>
        <dbReference type="ChEBI" id="CHEBI:18420"/>
        <label>1</label>
    </ligand>
</feature>
<feature type="binding site" evidence="1">
    <location>
        <position position="74"/>
    </location>
    <ligand>
        <name>Mg(2+)</name>
        <dbReference type="ChEBI" id="CHEBI:18420"/>
        <label>2</label>
    </ligand>
</feature>
<feature type="binding site" evidence="1">
    <location>
        <position position="149"/>
    </location>
    <ligand>
        <name>Mg(2+)</name>
        <dbReference type="ChEBI" id="CHEBI:18420"/>
        <label>1</label>
    </ligand>
</feature>
<gene>
    <name evidence="1" type="primary">ruvC</name>
    <name type="ordered locus">BF3101</name>
</gene>
<comment type="function">
    <text evidence="1">The RuvA-RuvB-RuvC complex processes Holliday junction (HJ) DNA during genetic recombination and DNA repair. Endonuclease that resolves HJ intermediates. Cleaves cruciform DNA by making single-stranded nicks across the HJ at symmetrical positions within the homologous arms, yielding a 5'-phosphate and a 3'-hydroxyl group; requires a central core of homology in the junction. The consensus cleavage sequence is 5'-(A/T)TT(C/G)-3'. Cleavage occurs on the 3'-side of the TT dinucleotide at the point of strand exchange. HJ branch migration catalyzed by RuvA-RuvB allows RuvC to scan DNA until it finds its consensus sequence, where it cleaves and resolves the cruciform DNA.</text>
</comment>
<comment type="catalytic activity">
    <reaction evidence="1">
        <text>Endonucleolytic cleavage at a junction such as a reciprocal single-stranded crossover between two homologous DNA duplexes (Holliday junction).</text>
        <dbReference type="EC" id="3.1.21.10"/>
    </reaction>
</comment>
<comment type="cofactor">
    <cofactor evidence="1">
        <name>Mg(2+)</name>
        <dbReference type="ChEBI" id="CHEBI:18420"/>
    </cofactor>
    <text evidence="1">Binds 2 Mg(2+) ion per subunit.</text>
</comment>
<comment type="subunit">
    <text evidence="1">Homodimer which binds Holliday junction (HJ) DNA. The HJ becomes 2-fold symmetrical on binding to RuvC with unstacked arms; it has a different conformation from HJ DNA in complex with RuvA. In the full resolvosome a probable DNA-RuvA(4)-RuvB(12)-RuvC(2) complex forms which resolves the HJ.</text>
</comment>
<comment type="subcellular location">
    <subcellularLocation>
        <location evidence="1">Cytoplasm</location>
    </subcellularLocation>
</comment>
<comment type="similarity">
    <text evidence="1">Belongs to the RuvC family.</text>
</comment>
<evidence type="ECO:0000255" key="1">
    <source>
        <dbReference type="HAMAP-Rule" id="MF_00034"/>
    </source>
</evidence>
<proteinExistence type="inferred from homology"/>
<protein>
    <recommendedName>
        <fullName evidence="1">Crossover junction endodeoxyribonuclease RuvC</fullName>
        <ecNumber evidence="1">3.1.21.10</ecNumber>
    </recommendedName>
    <alternativeName>
        <fullName evidence="1">Holliday junction nuclease RuvC</fullName>
    </alternativeName>
    <alternativeName>
        <fullName evidence="1">Holliday junction resolvase RuvC</fullName>
    </alternativeName>
</protein>
<keyword id="KW-0963">Cytoplasm</keyword>
<keyword id="KW-0227">DNA damage</keyword>
<keyword id="KW-0233">DNA recombination</keyword>
<keyword id="KW-0234">DNA repair</keyword>
<keyword id="KW-0238">DNA-binding</keyword>
<keyword id="KW-0255">Endonuclease</keyword>
<keyword id="KW-0378">Hydrolase</keyword>
<keyword id="KW-0460">Magnesium</keyword>
<keyword id="KW-0479">Metal-binding</keyword>
<keyword id="KW-0540">Nuclease</keyword>
<name>RUVC_BACFN</name>
<sequence>MIQPVKEKIILGIDPGTTIMGYGVLRVCGTRPEMIAMGIIDLRKFGNHYLKLRHIHERVLSIIESYLPDELAIEAPFFGKNVQSMLKLGRAQGVAMAAALSRDIPITEYAPLKIKMAITGNGQASKEQVADMLQRMLHFAKEDMPVFMDATDGLAAAYCHFLQMGRPVMEKGYSGWKDFIAKNPERVK</sequence>
<organism>
    <name type="scientific">Bacteroides fragilis (strain ATCC 25285 / DSM 2151 / CCUG 4856 / JCM 11019 / LMG 10263 / NCTC 9343 / Onslow / VPI 2553 / EN-2)</name>
    <dbReference type="NCBI Taxonomy" id="272559"/>
    <lineage>
        <taxon>Bacteria</taxon>
        <taxon>Pseudomonadati</taxon>
        <taxon>Bacteroidota</taxon>
        <taxon>Bacteroidia</taxon>
        <taxon>Bacteroidales</taxon>
        <taxon>Bacteroidaceae</taxon>
        <taxon>Bacteroides</taxon>
    </lineage>
</organism>
<reference key="1">
    <citation type="journal article" date="2005" name="Science">
        <title>Extensive DNA inversions in the B. fragilis genome control variable gene expression.</title>
        <authorList>
            <person name="Cerdeno-Tarraga A.-M."/>
            <person name="Patrick S."/>
            <person name="Crossman L.C."/>
            <person name="Blakely G."/>
            <person name="Abratt V."/>
            <person name="Lennard N."/>
            <person name="Poxton I."/>
            <person name="Duerden B."/>
            <person name="Harris B."/>
            <person name="Quail M.A."/>
            <person name="Barron A."/>
            <person name="Clark L."/>
            <person name="Corton C."/>
            <person name="Doggett J."/>
            <person name="Holden M.T.G."/>
            <person name="Larke N."/>
            <person name="Line A."/>
            <person name="Lord A."/>
            <person name="Norbertczak H."/>
            <person name="Ormond D."/>
            <person name="Price C."/>
            <person name="Rabbinowitsch E."/>
            <person name="Woodward J."/>
            <person name="Barrell B.G."/>
            <person name="Parkhill J."/>
        </authorList>
    </citation>
    <scope>NUCLEOTIDE SEQUENCE [LARGE SCALE GENOMIC DNA]</scope>
    <source>
        <strain>ATCC 25285 / DSM 2151 / CCUG 4856 / JCM 11019 / LMG 10263 / NCTC 9343 / Onslow / VPI 2553 / EN-2</strain>
    </source>
</reference>
<accession>Q5LAS7</accession>